<keyword id="KW-1232">Capsid decoration protein</keyword>
<keyword id="KW-0167">Capsid protein</keyword>
<keyword id="KW-1035">Host cytoplasm</keyword>
<keyword id="KW-0946">Virion</keyword>
<dbReference type="EMBL" id="L07418">
    <property type="protein sequence ID" value="AAA92985.1"/>
    <property type="molecule type" value="Genomic_RNA"/>
</dbReference>
<dbReference type="PIR" id="C37491">
    <property type="entry name" value="C37491"/>
</dbReference>
<dbReference type="IntAct" id="Q04550">
    <property type="interactions" value="1"/>
</dbReference>
<dbReference type="Proteomes" id="UP000007226">
    <property type="component" value="Genome"/>
</dbReference>
<dbReference type="GO" id="GO:0030430">
    <property type="term" value="C:host cell cytoplasm"/>
    <property type="evidence" value="ECO:0007669"/>
    <property type="project" value="UniProtKB-SubCell"/>
</dbReference>
<dbReference type="GO" id="GO:0098021">
    <property type="term" value="C:viral capsid, decoration"/>
    <property type="evidence" value="ECO:0007669"/>
    <property type="project" value="UniProtKB-KW"/>
</dbReference>
<dbReference type="InterPro" id="IPR004278">
    <property type="entry name" value="VP2"/>
</dbReference>
<dbReference type="Pfam" id="PF03035">
    <property type="entry name" value="RNA_capsid"/>
    <property type="match status" value="1"/>
</dbReference>
<organismHost>
    <name type="scientific">Homo sapiens</name>
    <name type="common">Human</name>
    <dbReference type="NCBI Taxonomy" id="9606"/>
</organismHost>
<sequence>MAQAIIGAIAASAAGSALGAGIQAGAEAALQSQRYQQDLALQRNTFEHDKDMLSYQVQASNALLAKNLNTRYSMLIAGGLSSADASRAVAGAPVTRLIDWNGTRVAAPRSSATTLRSGGFMAVPMPVQPKSKTPQSSGFSNPAYDMSTVSSRTSSWVQSQNSLRSVSPFHRQALQTVWVTPPGSTSSSSVSSTPYGVFNTDRMPLFANLRR</sequence>
<feature type="chain" id="PRO_0000100131" description="Minor capsid protein VP2">
    <location>
        <begin position="1"/>
        <end position="211"/>
    </location>
</feature>
<evidence type="ECO:0000250" key="1">
    <source>
        <dbReference type="UniProtKB" id="P28711"/>
    </source>
</evidence>
<evidence type="ECO:0000305" key="2"/>
<gene>
    <name type="ORF">ORF3</name>
</gene>
<accession>Q04550</accession>
<organism>
    <name type="scientific">Southampton virus (strain GI/Human/United Kingdom/Southampton/1991)</name>
    <name type="common">SHV</name>
    <name type="synonym">Hu/NV/SHV/1991/UK</name>
    <dbReference type="NCBI Taxonomy" id="37129"/>
    <lineage>
        <taxon>Viruses</taxon>
        <taxon>Riboviria</taxon>
        <taxon>Orthornavirae</taxon>
        <taxon>Pisuviricota</taxon>
        <taxon>Pisoniviricetes</taxon>
        <taxon>Picornavirales</taxon>
        <taxon>Caliciviridae</taxon>
        <taxon>Norovirus</taxon>
        <taxon>Norwalk virus</taxon>
    </lineage>
</organism>
<name>VP2_SOUV3</name>
<protein>
    <recommendedName>
        <fullName>Minor capsid protein VP2</fullName>
    </recommendedName>
</protein>
<reference key="1">
    <citation type="journal article" date="1993" name="Science">
        <title>Sequence and genome organization of a human small round-structured (Norwalk-like) virus.</title>
        <authorList>
            <person name="Lambden P.R."/>
            <person name="Caul E.O."/>
            <person name="Ashley C.R."/>
            <person name="Clarke I.N."/>
        </authorList>
    </citation>
    <scope>NUCLEOTIDE SEQUENCE [GENOMIC RNA]</scope>
</reference>
<comment type="function">
    <text evidence="1">Minor structural protein that forms a portal-like structure at a unique three-fold axis of symmetry, following binding to the host receptor. The channel formed by VP2 may allow the delivery of the viral genome through the host endosomal membrane.</text>
</comment>
<comment type="subunit">
    <text evidence="1">Homooligomer. The portal-like structure consists in 12 copies of VP2. Interacts with capsid protein VP1.</text>
</comment>
<comment type="subcellular location">
    <subcellularLocation>
        <location evidence="1">Virion</location>
    </subcellularLocation>
    <subcellularLocation>
        <location evidence="2">Host cytoplasm</location>
    </subcellularLocation>
</comment>
<comment type="domain">
    <text evidence="1">The N-terminus domain points away from the virion surface.</text>
</comment>
<comment type="miscellaneous">
    <text evidence="1">Translated by a ribosomal termination-reinitiation process from the bicistronic mRNA coding for VP1 and VP2.</text>
</comment>
<comment type="similarity">
    <text evidence="2">Belongs to the norovirus VP2 family.</text>
</comment>
<proteinExistence type="inferred from homology"/>